<keyword id="KW-0903">Direct protein sequencing</keyword>
<keyword id="KW-1015">Disulfide bond</keyword>
<keyword id="KW-0255">Endonuclease</keyword>
<keyword id="KW-0325">Glycoprotein</keyword>
<keyword id="KW-0378">Hydrolase</keyword>
<keyword id="KW-0456">Lyase</keyword>
<keyword id="KW-0540">Nuclease</keyword>
<keyword id="KW-0732">Signal</keyword>
<proteinExistence type="evidence at protein level"/>
<sequence>MGITGMVYVVTMVFLLIVLILSSSTVGYDYFQFTQQYQLAVCNSNRTPCKDPPDKLFTVHGLWPSSMAGPDPSNCPIRNIRKREKLLEPQLAIIWPNVFDRTKNKLFWDKEWMKHGTCGYPTIDNENHYFETVIKMYISKKQNVSRILSKAKIEPDGKKRALLDIENAIRNGADNKKPKLKCQKKGTTTELVEITLCSDKSGEHFIDCPHPFEPISPHYCPTNNIKY</sequence>
<organism>
    <name type="scientific">Pyrus pyrifolia</name>
    <name type="common">Chinese pear</name>
    <name type="synonym">Pyrus serotina</name>
    <dbReference type="NCBI Taxonomy" id="3767"/>
    <lineage>
        <taxon>Eukaryota</taxon>
        <taxon>Viridiplantae</taxon>
        <taxon>Streptophyta</taxon>
        <taxon>Embryophyta</taxon>
        <taxon>Tracheophyta</taxon>
        <taxon>Spermatophyta</taxon>
        <taxon>Magnoliopsida</taxon>
        <taxon>eudicotyledons</taxon>
        <taxon>Gunneridae</taxon>
        <taxon>Pentapetalae</taxon>
        <taxon>rosids</taxon>
        <taxon>fabids</taxon>
        <taxon>Rosales</taxon>
        <taxon>Rosaceae</taxon>
        <taxon>Amygdaloideae</taxon>
        <taxon>Maleae</taxon>
        <taxon>Pyrus</taxon>
    </lineage>
</organism>
<protein>
    <recommendedName>
        <fullName>Ribonuclease S-5</fullName>
        <ecNumber evidence="7">4.6.1.19</ecNumber>
    </recommendedName>
    <alternativeName>
        <fullName>S5-RNase</fullName>
    </alternativeName>
</protein>
<comment type="function">
    <text>Self-incompatibility (SI) is the inherited ability of a flowering plant to prevent self-fertilization by discriminating between self and non-self pollen during pollination. In many species, self-incompatibility is controlled by the single, multiallelic locus S.</text>
</comment>
<comment type="catalytic activity">
    <reaction evidence="6">
        <text>a ribonucleotidyl-ribonucleotide-RNA + H2O = a 3'-end 3'-phospho-ribonucleotide-RNA + a 5'-end dephospho-ribonucleoside-RNA + H(+)</text>
        <dbReference type="Rhea" id="RHEA:68052"/>
        <dbReference type="Rhea" id="RHEA-COMP:10463"/>
        <dbReference type="Rhea" id="RHEA-COMP:13936"/>
        <dbReference type="Rhea" id="RHEA-COMP:17355"/>
        <dbReference type="ChEBI" id="CHEBI:15377"/>
        <dbReference type="ChEBI" id="CHEBI:15378"/>
        <dbReference type="ChEBI" id="CHEBI:83062"/>
        <dbReference type="ChEBI" id="CHEBI:138284"/>
        <dbReference type="ChEBI" id="CHEBI:173118"/>
        <dbReference type="EC" id="4.6.1.19"/>
    </reaction>
</comment>
<comment type="PTM">
    <text evidence="8">N-glycan at Asn-45 consists of disaccharide (GlcNAc-GlcNAc). N-linked core structure at Asn-143 contains xylose.</text>
</comment>
<comment type="similarity">
    <text evidence="9">Belongs to the RNase T2 family.</text>
</comment>
<name>RNS5_PYRPY</name>
<reference key="1">
    <citation type="online journal article" date="1997" name="Plant Gene Register">
        <title>Nucleotide sequence of a cDNA encoding S5-Rnase from Japanese pear (Pyrus serotina).</title>
        <authorList>
            <person name="Sassa H."/>
            <person name="Hirano H."/>
        </authorList>
        <locator>PGR97-007</locator>
    </citation>
    <scope>NUCLEOTIDE SEQUENCE [MRNA]</scope>
    <source>
        <strain>cv. Kosui</strain>
        <tissue>Style</tissue>
    </source>
</reference>
<reference key="2">
    <citation type="journal article" date="1998" name="Plant Mol. Biol.">
        <title>Primary structural features of rosaceous S-RNases associated with gametophytic self-incompatibility.</title>
        <authorList>
            <person name="Ishimizu T."/>
            <person name="Shinkawa T."/>
            <person name="Sakiyama F."/>
            <person name="Norioka S."/>
        </authorList>
    </citation>
    <scope>NUCLEOTIDE SEQUENCE [MRNA]</scope>
    <scope>PARTIAL PROTEIN SEQUENCE</scope>
    <source>
        <strain>cv. Hosui</strain>
        <tissue>Style</tissue>
    </source>
</reference>
<reference key="3">
    <citation type="journal article" date="1999" name="Eur. J. Biochem.">
        <title>Presence of asparagine-linked N-acetylglucosamine and chitobiose in Pyrus pyrifolia S-RNases associated with gametophytic self-incompatibility.</title>
        <authorList>
            <person name="Ishimizu T."/>
            <person name="Mitsukami Y."/>
            <person name="Shinkawa T."/>
            <person name="Natsuka S."/>
            <person name="Hase S."/>
            <person name="Miyagi M."/>
            <person name="Sakiyama F."/>
            <person name="Norioka S."/>
        </authorList>
    </citation>
    <scope>GLYCOSYLATION AT ASN-45 AND ASN-143</scope>
    <scope>STRUCTURE OF CARBOHYDRATES</scope>
    <source>
        <strain>cv. Hosui</strain>
        <tissue>Style</tissue>
    </source>
</reference>
<dbReference type="EC" id="4.6.1.19" evidence="7"/>
<dbReference type="EMBL" id="D88282">
    <property type="protein sequence ID" value="BAA13577.1"/>
    <property type="molecule type" value="mRNA"/>
</dbReference>
<dbReference type="EMBL" id="AB002141">
    <property type="protein sequence ID" value="BAA32414.1"/>
    <property type="molecule type" value="mRNA"/>
</dbReference>
<dbReference type="SMR" id="P93460"/>
<dbReference type="iPTMnet" id="P93460"/>
<dbReference type="GO" id="GO:0005576">
    <property type="term" value="C:extracellular region"/>
    <property type="evidence" value="ECO:0007669"/>
    <property type="project" value="TreeGrafter"/>
</dbReference>
<dbReference type="GO" id="GO:0033897">
    <property type="term" value="F:ribonuclease T2 activity"/>
    <property type="evidence" value="ECO:0007669"/>
    <property type="project" value="UniProtKB-EC"/>
</dbReference>
<dbReference type="GO" id="GO:0003723">
    <property type="term" value="F:RNA binding"/>
    <property type="evidence" value="ECO:0007669"/>
    <property type="project" value="InterPro"/>
</dbReference>
<dbReference type="GO" id="GO:0006401">
    <property type="term" value="P:RNA catabolic process"/>
    <property type="evidence" value="ECO:0007669"/>
    <property type="project" value="TreeGrafter"/>
</dbReference>
<dbReference type="CDD" id="cd01061">
    <property type="entry name" value="RNase_T2_euk"/>
    <property type="match status" value="1"/>
</dbReference>
<dbReference type="Gene3D" id="3.90.730.10">
    <property type="entry name" value="Ribonuclease T2-like"/>
    <property type="match status" value="1"/>
</dbReference>
<dbReference type="InterPro" id="IPR033697">
    <property type="entry name" value="Ribonuclease_T2_eukaryotic"/>
</dbReference>
<dbReference type="InterPro" id="IPR001568">
    <property type="entry name" value="RNase_T2-like"/>
</dbReference>
<dbReference type="InterPro" id="IPR036430">
    <property type="entry name" value="RNase_T2-like_sf"/>
</dbReference>
<dbReference type="InterPro" id="IPR018188">
    <property type="entry name" value="RNase_T2_His_AS_1"/>
</dbReference>
<dbReference type="PANTHER" id="PTHR11240:SF75">
    <property type="entry name" value="RIBONUCLEASE 3"/>
    <property type="match status" value="1"/>
</dbReference>
<dbReference type="PANTHER" id="PTHR11240">
    <property type="entry name" value="RIBONUCLEASE T2"/>
    <property type="match status" value="1"/>
</dbReference>
<dbReference type="Pfam" id="PF00445">
    <property type="entry name" value="Ribonuclease_T2"/>
    <property type="match status" value="1"/>
</dbReference>
<dbReference type="SUPFAM" id="SSF55895">
    <property type="entry name" value="Ribonuclease Rh-like"/>
    <property type="match status" value="1"/>
</dbReference>
<dbReference type="PROSITE" id="PS00530">
    <property type="entry name" value="RNASE_T2_1"/>
    <property type="match status" value="1"/>
</dbReference>
<feature type="signal peptide" evidence="4">
    <location>
        <begin position="1"/>
        <end position="27"/>
    </location>
</feature>
<feature type="chain" id="PRO_0000030981" description="Ribonuclease S-5">
    <location>
        <begin position="28"/>
        <end position="227"/>
    </location>
</feature>
<feature type="active site" description="Proton donor" evidence="3 6">
    <location>
        <position position="60"/>
    </location>
</feature>
<feature type="active site" evidence="6">
    <location>
        <position position="111"/>
    </location>
</feature>
<feature type="active site" description="Proton acceptor" evidence="3 6">
    <location>
        <position position="115"/>
    </location>
</feature>
<feature type="binding site" evidence="2">
    <location>
        <position position="36"/>
    </location>
    <ligand>
        <name>RNA</name>
        <dbReference type="ChEBI" id="CHEBI:33697"/>
    </ligand>
    <ligandPart>
        <name>a 3'-terminal ribonucleotide 3'-phosphate residue</name>
        <dbReference type="ChEBI" id="CHEBI:83062"/>
    </ligandPart>
</feature>
<feature type="binding site" evidence="2">
    <location>
        <position position="60"/>
    </location>
    <ligand>
        <name>RNA</name>
        <dbReference type="ChEBI" id="CHEBI:33697"/>
    </ligand>
    <ligandPart>
        <name>a 3'-terminal ribonucleotide 3'-phosphate residue</name>
        <dbReference type="ChEBI" id="CHEBI:83062"/>
    </ligandPart>
</feature>
<feature type="binding site" evidence="2">
    <location>
        <begin position="97"/>
        <end position="98"/>
    </location>
    <ligand>
        <name>RNA</name>
        <dbReference type="ChEBI" id="CHEBI:33697"/>
    </ligand>
    <ligandPart>
        <name>a 3'-terminal ribonucleotide 3'-phosphate residue</name>
        <dbReference type="ChEBI" id="CHEBI:83062"/>
    </ligandPart>
</feature>
<feature type="binding site" evidence="2">
    <location>
        <position position="107"/>
    </location>
    <ligand>
        <name>RNA</name>
        <dbReference type="ChEBI" id="CHEBI:33697"/>
    </ligand>
    <ligandPart>
        <name>a 3'-terminal ribonucleotide 3'-phosphate residue</name>
        <dbReference type="ChEBI" id="CHEBI:83062"/>
    </ligandPart>
</feature>
<feature type="binding site" evidence="2">
    <location>
        <begin position="110"/>
        <end position="111"/>
    </location>
    <ligand>
        <name>RNA</name>
        <dbReference type="ChEBI" id="CHEBI:33697"/>
    </ligand>
    <ligandPart>
        <name>a 3'-terminal ribonucleotide 3'-phosphate residue</name>
        <dbReference type="ChEBI" id="CHEBI:83062"/>
    </ligandPart>
</feature>
<feature type="binding site" evidence="2">
    <location>
        <begin position="114"/>
        <end position="115"/>
    </location>
    <ligand>
        <name>RNA</name>
        <dbReference type="ChEBI" id="CHEBI:33697"/>
    </ligand>
    <ligandPart>
        <name>a 3'-terminal ribonucleotide 3'-phosphate residue</name>
        <dbReference type="ChEBI" id="CHEBI:83062"/>
    </ligandPart>
</feature>
<feature type="glycosylation site" description="N-linked (GlcNAc...) asparagine" evidence="5 8">
    <location>
        <position position="45"/>
    </location>
</feature>
<feature type="glycosylation site" description="N-linked (GlcNAc...) asparagine" evidence="5 8">
    <location>
        <position position="143"/>
    </location>
</feature>
<feature type="disulfide bond" evidence="3">
    <location>
        <begin position="42"/>
        <end position="49"/>
    </location>
</feature>
<feature type="disulfide bond" evidence="1">
    <location>
        <begin position="75"/>
        <end position="118"/>
    </location>
</feature>
<feature type="disulfide bond" evidence="1">
    <location>
        <begin position="182"/>
        <end position="220"/>
    </location>
</feature>
<feature type="disulfide bond" evidence="2">
    <location>
        <begin position="197"/>
        <end position="208"/>
    </location>
</feature>
<accession>P93460</accession>
<evidence type="ECO:0000250" key="1">
    <source>
        <dbReference type="UniProtKB" id="P08056"/>
    </source>
</evidence>
<evidence type="ECO:0000250" key="2">
    <source>
        <dbReference type="UniProtKB" id="P23540"/>
    </source>
</evidence>
<evidence type="ECO:0000250" key="3">
    <source>
        <dbReference type="UniProtKB" id="Q7SID5"/>
    </source>
</evidence>
<evidence type="ECO:0000255" key="4"/>
<evidence type="ECO:0000255" key="5">
    <source>
        <dbReference type="PROSITE-ProRule" id="PRU00498"/>
    </source>
</evidence>
<evidence type="ECO:0000255" key="6">
    <source>
        <dbReference type="PROSITE-ProRule" id="PRU10045"/>
    </source>
</evidence>
<evidence type="ECO:0000255" key="7">
    <source>
        <dbReference type="PROSITE-ProRule" id="PRU10046"/>
    </source>
</evidence>
<evidence type="ECO:0000269" key="8">
    <source>
    </source>
</evidence>
<evidence type="ECO:0000305" key="9"/>